<reference key="1">
    <citation type="journal article" date="2000" name="Evolution">
        <title>Mitochondrial DNA phylogeography of the polytypic North American rat snake (Elaphe obsoleta): a critique of the subspecies concept.</title>
        <authorList>
            <person name="Burbrink F.T."/>
            <person name="Lawson R."/>
            <person name="Slowinski J.B."/>
        </authorList>
    </citation>
    <scope>NUCLEOTIDE SEQUENCE [GENOMIC DNA]</scope>
</reference>
<dbReference type="EMBL" id="AF283598">
    <property type="protein sequence ID" value="AAG26414.1"/>
    <property type="molecule type" value="Genomic_DNA"/>
</dbReference>
<dbReference type="EMBL" id="AF283599">
    <property type="protein sequence ID" value="AAG26415.1"/>
    <property type="molecule type" value="Genomic_DNA"/>
</dbReference>
<dbReference type="SMR" id="Q9G250"/>
<dbReference type="GO" id="GO:0005743">
    <property type="term" value="C:mitochondrial inner membrane"/>
    <property type="evidence" value="ECO:0007669"/>
    <property type="project" value="UniProtKB-SubCell"/>
</dbReference>
<dbReference type="GO" id="GO:0045275">
    <property type="term" value="C:respiratory chain complex III"/>
    <property type="evidence" value="ECO:0007669"/>
    <property type="project" value="InterPro"/>
</dbReference>
<dbReference type="GO" id="GO:0046872">
    <property type="term" value="F:metal ion binding"/>
    <property type="evidence" value="ECO:0007669"/>
    <property type="project" value="UniProtKB-KW"/>
</dbReference>
<dbReference type="GO" id="GO:0008121">
    <property type="term" value="F:ubiquinol-cytochrome-c reductase activity"/>
    <property type="evidence" value="ECO:0007669"/>
    <property type="project" value="InterPro"/>
</dbReference>
<dbReference type="GO" id="GO:0006122">
    <property type="term" value="P:mitochondrial electron transport, ubiquinol to cytochrome c"/>
    <property type="evidence" value="ECO:0007669"/>
    <property type="project" value="TreeGrafter"/>
</dbReference>
<dbReference type="CDD" id="cd00290">
    <property type="entry name" value="cytochrome_b_C"/>
    <property type="match status" value="1"/>
</dbReference>
<dbReference type="CDD" id="cd00284">
    <property type="entry name" value="Cytochrome_b_N"/>
    <property type="match status" value="1"/>
</dbReference>
<dbReference type="Gene3D" id="1.20.810.10">
    <property type="entry name" value="Cytochrome Bc1 Complex, Chain C"/>
    <property type="match status" value="1"/>
</dbReference>
<dbReference type="InterPro" id="IPR005798">
    <property type="entry name" value="Cyt_b/b6_C"/>
</dbReference>
<dbReference type="InterPro" id="IPR036150">
    <property type="entry name" value="Cyt_b/b6_C_sf"/>
</dbReference>
<dbReference type="InterPro" id="IPR005797">
    <property type="entry name" value="Cyt_b/b6_N"/>
</dbReference>
<dbReference type="InterPro" id="IPR027387">
    <property type="entry name" value="Cytb/b6-like_sf"/>
</dbReference>
<dbReference type="InterPro" id="IPR030689">
    <property type="entry name" value="Cytochrome_b"/>
</dbReference>
<dbReference type="InterPro" id="IPR048260">
    <property type="entry name" value="Cytochrome_b_C_euk/bac"/>
</dbReference>
<dbReference type="InterPro" id="IPR048259">
    <property type="entry name" value="Cytochrome_b_N_euk/bac"/>
</dbReference>
<dbReference type="InterPro" id="IPR016174">
    <property type="entry name" value="Di-haem_cyt_TM"/>
</dbReference>
<dbReference type="PANTHER" id="PTHR19271">
    <property type="entry name" value="CYTOCHROME B"/>
    <property type="match status" value="1"/>
</dbReference>
<dbReference type="PANTHER" id="PTHR19271:SF16">
    <property type="entry name" value="CYTOCHROME B"/>
    <property type="match status" value="1"/>
</dbReference>
<dbReference type="Pfam" id="PF00032">
    <property type="entry name" value="Cytochrom_B_C"/>
    <property type="match status" value="1"/>
</dbReference>
<dbReference type="Pfam" id="PF00033">
    <property type="entry name" value="Cytochrome_B"/>
    <property type="match status" value="1"/>
</dbReference>
<dbReference type="PIRSF" id="PIRSF038885">
    <property type="entry name" value="COB"/>
    <property type="match status" value="1"/>
</dbReference>
<dbReference type="SUPFAM" id="SSF81648">
    <property type="entry name" value="a domain/subunit of cytochrome bc1 complex (Ubiquinol-cytochrome c reductase)"/>
    <property type="match status" value="1"/>
</dbReference>
<dbReference type="SUPFAM" id="SSF81342">
    <property type="entry name" value="Transmembrane di-heme cytochromes"/>
    <property type="match status" value="1"/>
</dbReference>
<dbReference type="PROSITE" id="PS51003">
    <property type="entry name" value="CYTB_CTER"/>
    <property type="match status" value="1"/>
</dbReference>
<dbReference type="PROSITE" id="PS51002">
    <property type="entry name" value="CYTB_NTER"/>
    <property type="match status" value="1"/>
</dbReference>
<geneLocation type="mitochondrion"/>
<evidence type="ECO:0000250" key="1"/>
<evidence type="ECO:0000250" key="2">
    <source>
        <dbReference type="UniProtKB" id="P00157"/>
    </source>
</evidence>
<evidence type="ECO:0000255" key="3">
    <source>
        <dbReference type="PROSITE-ProRule" id="PRU00967"/>
    </source>
</evidence>
<evidence type="ECO:0000255" key="4">
    <source>
        <dbReference type="PROSITE-ProRule" id="PRU00968"/>
    </source>
</evidence>
<accession>Q9G250</accession>
<protein>
    <recommendedName>
        <fullName>Cytochrome b</fullName>
    </recommendedName>
    <alternativeName>
        <fullName>Complex III subunit 3</fullName>
    </alternativeName>
    <alternativeName>
        <fullName>Complex III subunit III</fullName>
    </alternativeName>
    <alternativeName>
        <fullName>Cytochrome b-c1 complex subunit 3</fullName>
    </alternativeName>
    <alternativeName>
        <fullName>Ubiquinol-cytochrome-c reductase complex cytochrome b subunit</fullName>
    </alternativeName>
</protein>
<keyword id="KW-0249">Electron transport</keyword>
<keyword id="KW-0349">Heme</keyword>
<keyword id="KW-0408">Iron</keyword>
<keyword id="KW-0472">Membrane</keyword>
<keyword id="KW-0479">Metal-binding</keyword>
<keyword id="KW-0496">Mitochondrion</keyword>
<keyword id="KW-0999">Mitochondrion inner membrane</keyword>
<keyword id="KW-0679">Respiratory chain</keyword>
<keyword id="KW-0812">Transmembrane</keyword>
<keyword id="KW-1133">Transmembrane helix</keyword>
<keyword id="KW-0813">Transport</keyword>
<keyword id="KW-0830">Ubiquinone</keyword>
<comment type="function">
    <text evidence="2">Component of the ubiquinol-cytochrome c reductase complex (complex III or cytochrome b-c1 complex) that is part of the mitochondrial respiratory chain. The b-c1 complex mediates electron transfer from ubiquinol to cytochrome c. Contributes to the generation of a proton gradient across the mitochondrial membrane that is then used for ATP synthesis.</text>
</comment>
<comment type="cofactor">
    <cofactor evidence="2">
        <name>heme b</name>
        <dbReference type="ChEBI" id="CHEBI:60344"/>
    </cofactor>
    <text evidence="2">Binds 2 heme b groups non-covalently.</text>
</comment>
<comment type="subunit">
    <text evidence="2">The cytochrome bc1 complex contains 3 respiratory subunits (MT-CYB, CYC1 and UQCRFS1), 2 core proteins (UQCRC1 and UQCRC2) and probably 6 low-molecular weight proteins.</text>
</comment>
<comment type="subcellular location">
    <subcellularLocation>
        <location evidence="2">Mitochondrion inner membrane</location>
        <topology evidence="2">Multi-pass membrane protein</topology>
    </subcellularLocation>
</comment>
<comment type="miscellaneous">
    <text evidence="1">Heme 1 (or BL or b562) is low-potential and absorbs at about 562 nm, and heme 2 (or BH or b566) is high-potential and absorbs at about 566 nm.</text>
</comment>
<comment type="similarity">
    <text evidence="3 4">Belongs to the cytochrome b family.</text>
</comment>
<comment type="caution">
    <text evidence="2">The full-length protein contains only eight transmembrane helices, not nine as predicted by bioinformatics tools.</text>
</comment>
<sequence>MPNQHMLLLFNLLPVGSNISTWWNFGSMLLTCLALQTMTGFFLAIHYTANINLSFSSIVHITRDVPYGWMMQNLHAIGASMFFICIYIHIARGLYYGSFLNKNVWLSGTTLLIILMATAFFGYVLPWGQMSFWAATVITNLLTAVPYIGTELTNWLWGGFSINDPTLTRFFALHFILPFTIISMSSIHIMLLHTEGSSNPLGTNSDIDKIPFHPYHSHKDMLMLTIMMTALFIIMSFNPNIFNDPENFSKANPLVTPQHIKPEWYFLFAYGILRSIPNKLGGAVALVLSVTILMTMPFTHTSHMRSMAFRPLMQFMFWTLVTTFIMITWAATKPVEPPFTTIGQVTSILYFTFFIMNPLLGWLENKISITNM</sequence>
<name>CYB_PANBA</name>
<gene>
    <name type="primary">MT-CYB</name>
    <name type="synonym">COB</name>
    <name type="synonym">CYTB</name>
    <name type="synonym">MTCYB</name>
</gene>
<feature type="chain" id="PRO_0000060906" description="Cytochrome b">
    <location>
        <begin position="1"/>
        <end position="372"/>
    </location>
</feature>
<feature type="transmembrane region" description="Helical" evidence="2">
    <location>
        <begin position="25"/>
        <end position="45"/>
    </location>
</feature>
<feature type="transmembrane region" description="Helical" evidence="2">
    <location>
        <begin position="69"/>
        <end position="90"/>
    </location>
</feature>
<feature type="transmembrane region" description="Helical" evidence="2">
    <location>
        <begin position="105"/>
        <end position="125"/>
    </location>
</feature>
<feature type="transmembrane region" description="Helical" evidence="2">
    <location>
        <begin position="170"/>
        <end position="190"/>
    </location>
</feature>
<feature type="transmembrane region" description="Helical" evidence="2">
    <location>
        <begin position="218"/>
        <end position="238"/>
    </location>
</feature>
<feature type="transmembrane region" description="Helical" evidence="2">
    <location>
        <begin position="280"/>
        <end position="300"/>
    </location>
</feature>
<feature type="transmembrane region" description="Helical" evidence="2">
    <location>
        <begin position="312"/>
        <end position="332"/>
    </location>
</feature>
<feature type="transmembrane region" description="Helical" evidence="2">
    <location>
        <begin position="339"/>
        <end position="358"/>
    </location>
</feature>
<feature type="binding site" description="axial binding residue" evidence="2">
    <location>
        <position position="75"/>
    </location>
    <ligand>
        <name>heme b</name>
        <dbReference type="ChEBI" id="CHEBI:60344"/>
        <label>b562</label>
    </ligand>
    <ligandPart>
        <name>Fe</name>
        <dbReference type="ChEBI" id="CHEBI:18248"/>
    </ligandPart>
</feature>
<feature type="binding site" description="axial binding residue" evidence="2">
    <location>
        <position position="89"/>
    </location>
    <ligand>
        <name>heme b</name>
        <dbReference type="ChEBI" id="CHEBI:60344"/>
        <label>b566</label>
    </ligand>
    <ligandPart>
        <name>Fe</name>
        <dbReference type="ChEBI" id="CHEBI:18248"/>
    </ligandPart>
</feature>
<feature type="binding site" description="axial binding residue" evidence="2">
    <location>
        <position position="174"/>
    </location>
    <ligand>
        <name>heme b</name>
        <dbReference type="ChEBI" id="CHEBI:60344"/>
        <label>b562</label>
    </ligand>
    <ligandPart>
        <name>Fe</name>
        <dbReference type="ChEBI" id="CHEBI:18248"/>
    </ligandPart>
</feature>
<feature type="binding site" description="axial binding residue" evidence="2">
    <location>
        <position position="188"/>
    </location>
    <ligand>
        <name>heme b</name>
        <dbReference type="ChEBI" id="CHEBI:60344"/>
        <label>b566</label>
    </ligand>
    <ligandPart>
        <name>Fe</name>
        <dbReference type="ChEBI" id="CHEBI:18248"/>
    </ligandPart>
</feature>
<feature type="binding site" evidence="2">
    <location>
        <position position="193"/>
    </location>
    <ligand>
        <name>a ubiquinone</name>
        <dbReference type="ChEBI" id="CHEBI:16389"/>
    </ligand>
</feature>
<proteinExistence type="inferred from homology"/>
<organism>
    <name type="scientific">Pantherophis bairdi</name>
    <name type="common">Baird's ratsnake</name>
    <name type="synonym">Elaphe bairdi</name>
    <dbReference type="NCBI Taxonomy" id="94884"/>
    <lineage>
        <taxon>Eukaryota</taxon>
        <taxon>Metazoa</taxon>
        <taxon>Chordata</taxon>
        <taxon>Craniata</taxon>
        <taxon>Vertebrata</taxon>
        <taxon>Euteleostomi</taxon>
        <taxon>Lepidosauria</taxon>
        <taxon>Squamata</taxon>
        <taxon>Bifurcata</taxon>
        <taxon>Unidentata</taxon>
        <taxon>Episquamata</taxon>
        <taxon>Toxicofera</taxon>
        <taxon>Serpentes</taxon>
        <taxon>Colubroidea</taxon>
        <taxon>Colubridae</taxon>
        <taxon>Colubrinae</taxon>
        <taxon>Pantherophis</taxon>
    </lineage>
</organism>